<organism>
    <name type="scientific">Homo sapiens</name>
    <name type="common">Human</name>
    <dbReference type="NCBI Taxonomy" id="9606"/>
    <lineage>
        <taxon>Eukaryota</taxon>
        <taxon>Metazoa</taxon>
        <taxon>Chordata</taxon>
        <taxon>Craniata</taxon>
        <taxon>Vertebrata</taxon>
        <taxon>Euteleostomi</taxon>
        <taxon>Mammalia</taxon>
        <taxon>Eutheria</taxon>
        <taxon>Euarchontoglires</taxon>
        <taxon>Primates</taxon>
        <taxon>Haplorrhini</taxon>
        <taxon>Catarrhini</taxon>
        <taxon>Hominidae</taxon>
        <taxon>Homo</taxon>
    </lineage>
</organism>
<comment type="function">
    <text evidence="1 9 10 11 14 15 16 17 20 21 22">Serine/threonine-protein kinase that activates necroptosis and apoptosis, two parallel forms of cell death (PubMed:19524512, PubMed:19524513, PubMed:22265413, PubMed:22265414, PubMed:22421439, PubMed:29883609, PubMed:32657447). Necroptosis, a programmed cell death process in response to death-inducing TNF-alpha family members, is triggered by RIPK3 following activation by ZBP1 (PubMed:19524512, PubMed:19524513, PubMed:22265413, PubMed:22265414, PubMed:22421439, PubMed:29883609, PubMed:32298652). Activated RIPK3 forms a necrosis-inducing complex and mediates phosphorylation of MLKL, promoting MLKL localization to the plasma membrane and execution of programmed necrosis characterized by calcium influx and plasma membrane damage (PubMed:19524512, PubMed:19524513, PubMed:22265413, PubMed:22265414, PubMed:22421439, PubMed:25316792, PubMed:29883609). In addition to TNF-induced necroptosis, necroptosis can also take place in the nucleus in response to orthomyxoviruses infection: following ZBP1 activation, which senses double-stranded Z-RNA structures, nuclear RIPK3 catalyzes phosphorylation and activation of MLKL, promoting disruption of the nuclear envelope and leakage of cellular DNA into the cytosol (By similarity). Also regulates apoptosis: apoptosis depends on RIPK1, FADD and CASP8, and is independent of MLKL and RIPK3 kinase activity (By similarity). Phosphorylates RIPK1: RIPK1 and RIPK3 undergo reciprocal auto- and trans-phosphorylation (PubMed:19524513). In some cell types, also able to restrict viral replication by promoting cell death-independent responses (By similarity). In response to Zika virus infection in neurons, promotes a cell death-independent pathway that restricts viral replication: together with ZBP1, promotes a death-independent transcriptional program that modifies the cellular metabolism via up-regulation expression of the enzyme ACOD1/IRG1 and production of the metabolite itaconate (By similarity). Itaconate inhibits the activity of succinate dehydrogenase, generating a metabolic state in neurons that suppresses replication of viral genomes (By similarity). RIPK3 binds to and enhances the activity of three metabolic enzymes: GLUL, GLUD1, and PYGL (PubMed:19498109). These metabolic enzymes may eventually stimulate the tricarboxylic acid cycle and oxidative phosphorylation, which could result in enhanced ROS production (PubMed:19498109).</text>
</comment>
<comment type="function">
    <text evidence="23">(Microbial infection) In case of herpes simplex virus 1/HHV-1 infection, forms heteromeric amyloid structures with HHV-1 protein RIR1/ICP6 which may inhibit RIPK3-mediated necroptosis, thereby preventing host cell death pathway and allowing viral evasion.</text>
</comment>
<comment type="catalytic activity">
    <reaction evidence="11 14">
        <text>L-seryl-[protein] + ATP = O-phospho-L-seryl-[protein] + ADP + H(+)</text>
        <dbReference type="Rhea" id="RHEA:17989"/>
        <dbReference type="Rhea" id="RHEA-COMP:9863"/>
        <dbReference type="Rhea" id="RHEA-COMP:11604"/>
        <dbReference type="ChEBI" id="CHEBI:15378"/>
        <dbReference type="ChEBI" id="CHEBI:29999"/>
        <dbReference type="ChEBI" id="CHEBI:30616"/>
        <dbReference type="ChEBI" id="CHEBI:83421"/>
        <dbReference type="ChEBI" id="CHEBI:456216"/>
        <dbReference type="EC" id="2.7.11.1"/>
    </reaction>
</comment>
<comment type="catalytic activity">
    <reaction evidence="11 14">
        <text>L-threonyl-[protein] + ATP = O-phospho-L-threonyl-[protein] + ADP + H(+)</text>
        <dbReference type="Rhea" id="RHEA:46608"/>
        <dbReference type="Rhea" id="RHEA-COMP:11060"/>
        <dbReference type="Rhea" id="RHEA-COMP:11605"/>
        <dbReference type="ChEBI" id="CHEBI:15378"/>
        <dbReference type="ChEBI" id="CHEBI:30013"/>
        <dbReference type="ChEBI" id="CHEBI:30616"/>
        <dbReference type="ChEBI" id="CHEBI:61977"/>
        <dbReference type="ChEBI" id="CHEBI:456216"/>
        <dbReference type="EC" id="2.7.11.1"/>
    </reaction>
</comment>
<comment type="activity regulation">
    <text evidence="1">Activity is stimulated by ZBP1, which senses double-stranded Z-RNA structures (By similarity). RIPK3-dependent necroptosis is inhibited by RIPK1: RIPK1 prevents the ZBP1-induced activation of RIPK3 via FADD-mediated recruitment of CASP8, which cleaves RIPK1 and limits TNF-induced necroptosis (By similarity).</text>
</comment>
<comment type="subunit">
    <text evidence="1 4 6 9 10 12 13 14 15 16 19 20 21">Interacts (via RIP homotypic interaction motif) with RIPK1 (via RIP homotypic interaction motif); this interaction induces RIPK1 phosphorylation and formation of a RIPK1-RIPK3 necrosis-inducing complex (PubMed:10339433, PubMed:11734559, PubMed:19524512, PubMed:29681455). Interacts with MLKL; the interaction is direct and triggers necroptosis (PubMed:22265413, PubMed:22421439). Interacts with ZBP1 (via RIP homotypic interaction motif); interaction with ZBP1 activates RIPK3, triggering necroptosis (By similarity). Upon TNF-induced necrosis, the RIPK1-RIPK3 dimer further interacts with PGAM5 and MLKL; the formation of this complex leads to PGAM5 phosphorylation and increase in PGAM5 phosphatase activity (PubMed:22265413, PubMed:22265414, PubMed:22421439). Binds TRAF2 and is recruited to the TNFR-1 signaling complex (PubMed:29883609). Interacts with PYGL, GLUL and GLUD1; these interactions result in activation of these metabolic enzymes (PubMed:19498109). Interacts with BIRC2/c-IAP1, BIRC3/c-IAP2 and XIAP/BIRC4 (PubMed:21931591). Interacts with ARHGEF2 (PubMed:21887730). Interacts with PELI1 (via atypical FHA domain); the phosphorylated form at Thr-182 binds preferentially to PELI1 (PubMed:29883609). Interacts with BUB1B, TRAF2 and STUB1 (PubMed:29883609). Interacts with CASP6 (PubMed:32298652). Component of the AIM2 PANoptosome complex, a multiprotein complex that drives inflammatory cell death (PANoptosis) (By similarity).</text>
</comment>
<comment type="subunit">
    <text evidence="18 23 33">(Microbial infection) Interacts (via RIP homotypic interaction motif/RHIM) with herpes simplex virus 1/HHV-1 protein RIR1/ICP6 (via RHIM); this interaction may induce heteromeric amyloid assemblies and prevent necroptosis activation.</text>
</comment>
<comment type="subunit">
    <text evidence="18">(Microbial infection) Interacts (via RIP homotypic interaction motif/RHIM) with herpes simplex virus 2/HHV-2 protein RIR1/ICP10 (via RHIM); this interaction prevents necroptosis activation.</text>
</comment>
<comment type="interaction">
    <interactant intactId="EBI-298250">
        <id>Q9Y572</id>
    </interactant>
    <interactant intactId="EBI-514538">
        <id>Q13490</id>
        <label>BIRC2</label>
    </interactant>
    <organismsDiffer>false</organismsDiffer>
    <experiments>3</experiments>
</comment>
<comment type="interaction">
    <interactant intactId="EBI-298250">
        <id>Q9Y572</id>
    </interactant>
    <interactant intactId="EBI-517709">
        <id>Q13489</id>
        <label>BIRC3</label>
    </interactant>
    <organismsDiffer>false</organismsDiffer>
    <experiments>3</experiments>
</comment>
<comment type="interaction">
    <interactant intactId="EBI-298250">
        <id>Q9Y572</id>
    </interactant>
    <interactant intactId="EBI-1055040">
        <id>Q8NB16</id>
        <label>MLKL</label>
    </interactant>
    <organismsDiffer>false</organismsDiffer>
    <experiments>10</experiments>
</comment>
<comment type="interaction">
    <interactant intactId="EBI-298250">
        <id>Q9Y572</id>
    </interactant>
    <interactant intactId="EBI-358507">
        <id>Q13546</id>
        <label>RIPK1</label>
    </interactant>
    <organismsDiffer>false</organismsDiffer>
    <experiments>27</experiments>
</comment>
<comment type="interaction">
    <interactant intactId="EBI-298250">
        <id>Q9Y572</id>
    </interactant>
    <interactant intactId="EBI-298250">
        <id>Q9Y572</id>
        <label>RIPK3</label>
    </interactant>
    <organismsDiffer>false</organismsDiffer>
    <experiments>5</experiments>
</comment>
<comment type="interaction">
    <interactant intactId="EBI-298250">
        <id>Q9Y572</id>
    </interactant>
    <interactant intactId="EBI-6264672">
        <id>Q9H171</id>
        <label>ZBP1</label>
    </interactant>
    <organismsDiffer>false</organismsDiffer>
    <experiments>4</experiments>
</comment>
<comment type="interaction">
    <interactant intactId="EBI-298250">
        <id>Q9Y572</id>
    </interactant>
    <interactant intactId="EBI-25488975">
        <id>J9TC74</id>
        <label>ORF3a</label>
    </interactant>
    <organismsDiffer>true</organismsDiffer>
    <experiments>3</experiments>
</comment>
<comment type="subcellular location">
    <subcellularLocation>
        <location evidence="14">Cytoplasm</location>
        <location evidence="14">Cytosol</location>
    </subcellularLocation>
    <subcellularLocation>
        <location evidence="1">Nucleus</location>
    </subcellularLocation>
    <text evidence="1">Mainly cytoplasmic. Present in the nucleus in response to influenza A virus (IAV) infection.</text>
</comment>
<comment type="alternative products">
    <event type="alternative splicing"/>
    <isoform>
        <id>Q9Y572-1</id>
        <name>1</name>
        <sequence type="displayed"/>
    </isoform>
    <isoform>
        <id>Q9Y572-2</id>
        <name>2</name>
        <name>Beta</name>
        <sequence type="described" ref="VSP_035106"/>
    </isoform>
    <isoform>
        <id>Q9Y572-3</id>
        <name>3</name>
        <name>Gamma</name>
        <sequence type="described" ref="VSP_035107"/>
    </isoform>
</comment>
<comment type="tissue specificity">
    <text evidence="7">Highly expressed in the pancreas. Detected at lower levels in heart, placenta, lung and kidney.</text>
</comment>
<comment type="tissue specificity">
    <molecule>Isoform 3</molecule>
    <text evidence="7">Expression is significantly increased in colon and lung cancers.</text>
</comment>
<comment type="domain">
    <text evidence="19">The RIP homotypic interaction motif/RHIM mediates interaction with the RHIM motif of RIPK1. Both motifs form a hetero-amyloid serpentine fold, stabilized by hydrophobic packing and featuring an unusual Cys-Ser ladder of alternating Ser (from RIPK1) and Cys (from RIPK3).</text>
</comment>
<comment type="domain">
    <text evidence="23">(Microbial infection) The RIP homotypic interaction motif/RHIM mediates interaction with the RHIM motif of the herpes simplex virus 1/HHV-1 protein RIR1/ICP6 to form heteromeric amyloid structures.</text>
</comment>
<comment type="PTM">
    <text evidence="22">(Microbial infection) Proteolytically cleaved by S.flexneri OspD3 within the RIP homotypic interaction motif (RHIM), leading to its degradation and inhibition of necroptosis.</text>
</comment>
<comment type="PTM">
    <text evidence="1 6 10 11 14 20">RIPK1 and RIPK3 undergo reciprocal auto- and trans-phosphorylation (PubMed:19524513). Autophosphorylated following interaction with ZBP1 (By similarity). Phosphorylation of Ser-199 plays a role in the necroptotic function of RIPK3 (PubMed:11734559, PubMed:19524512). Autophosphorylates at Ser-227 following activation by ZBP1: phosphorylation at these sites is a hallmark of necroptosis and is required for binding MLKL (PubMed:22265413). Phosphorylation at Thr-182 is important for its kinase activity, interaction with PELI1 and PELI1-mediated 'Lys-48'-linked polyubiquitination and for its ability to mediate TNF-induced necroptosis (PubMed:29883609).</text>
</comment>
<comment type="PTM">
    <text evidence="13 20 24">Polyubiquitinated with 'Lys-48' and 'Lys-63'-linked chains by BIRC2/c-IAP1 and BIRC3/c-IAP2, leading to activation of NF-kappa-B (PubMed:21931591). Polyubiquitinated with 'Lys-48'-linked chains by PELI1 leading to its subsequent proteasome-dependent degradation. Ubiquitinated by STUB1 leading to its subsequent proteasome-dependent degradation (PubMed:29883609). Deubiquitinated by USP22 (PubMed:33369872).</text>
</comment>
<comment type="similarity">
    <text evidence="28">Belongs to the protein kinase superfamily. TKL Ser/Thr protein kinase family.</text>
</comment>
<keyword id="KW-0002">3D-structure</keyword>
<keyword id="KW-0025">Alternative splicing</keyword>
<keyword id="KW-0053">Apoptosis</keyword>
<keyword id="KW-0067">ATP-binding</keyword>
<keyword id="KW-0963">Cytoplasm</keyword>
<keyword id="KW-0945">Host-virus interaction</keyword>
<keyword id="KW-1017">Isopeptide bond</keyword>
<keyword id="KW-0418">Kinase</keyword>
<keyword id="KW-1210">Necrosis</keyword>
<keyword id="KW-0547">Nucleotide-binding</keyword>
<keyword id="KW-0539">Nucleus</keyword>
<keyword id="KW-0597">Phosphoprotein</keyword>
<keyword id="KW-1267">Proteomics identification</keyword>
<keyword id="KW-1185">Reference proteome</keyword>
<keyword id="KW-0723">Serine/threonine-protein kinase</keyword>
<keyword id="KW-0808">Transferase</keyword>
<keyword id="KW-0832">Ubl conjugation</keyword>
<evidence type="ECO:0000250" key="1">
    <source>
        <dbReference type="UniProtKB" id="Q9QZL0"/>
    </source>
</evidence>
<evidence type="ECO:0000255" key="2">
    <source>
        <dbReference type="PROSITE-ProRule" id="PRU00159"/>
    </source>
</evidence>
<evidence type="ECO:0000256" key="3">
    <source>
        <dbReference type="SAM" id="MobiDB-lite"/>
    </source>
</evidence>
<evidence type="ECO:0000269" key="4">
    <source>
    </source>
</evidence>
<evidence type="ECO:0000269" key="5">
    <source>
    </source>
</evidence>
<evidence type="ECO:0000269" key="6">
    <source>
    </source>
</evidence>
<evidence type="ECO:0000269" key="7">
    <source>
    </source>
</evidence>
<evidence type="ECO:0000269" key="8">
    <source>
    </source>
</evidence>
<evidence type="ECO:0000269" key="9">
    <source>
    </source>
</evidence>
<evidence type="ECO:0000269" key="10">
    <source>
    </source>
</evidence>
<evidence type="ECO:0000269" key="11">
    <source>
    </source>
</evidence>
<evidence type="ECO:0000269" key="12">
    <source>
    </source>
</evidence>
<evidence type="ECO:0000269" key="13">
    <source>
    </source>
</evidence>
<evidence type="ECO:0000269" key="14">
    <source>
    </source>
</evidence>
<evidence type="ECO:0000269" key="15">
    <source>
    </source>
</evidence>
<evidence type="ECO:0000269" key="16">
    <source>
    </source>
</evidence>
<evidence type="ECO:0000269" key="17">
    <source>
    </source>
</evidence>
<evidence type="ECO:0000269" key="18">
    <source>
    </source>
</evidence>
<evidence type="ECO:0000269" key="19">
    <source>
    </source>
</evidence>
<evidence type="ECO:0000269" key="20">
    <source>
    </source>
</evidence>
<evidence type="ECO:0000269" key="21">
    <source>
    </source>
</evidence>
<evidence type="ECO:0000269" key="22">
    <source>
    </source>
</evidence>
<evidence type="ECO:0000269" key="23">
    <source>
    </source>
</evidence>
<evidence type="ECO:0000269" key="24">
    <source>
    </source>
</evidence>
<evidence type="ECO:0000303" key="25">
    <source>
    </source>
</evidence>
<evidence type="ECO:0000303" key="26">
    <source>
    </source>
</evidence>
<evidence type="ECO:0000303" key="27">
    <source>
    </source>
</evidence>
<evidence type="ECO:0000305" key="28"/>
<evidence type="ECO:0000305" key="29">
    <source>
    </source>
</evidence>
<evidence type="ECO:0000305" key="30">
    <source>
    </source>
</evidence>
<evidence type="ECO:0000305" key="31">
    <source>
    </source>
</evidence>
<evidence type="ECO:0000305" key="32">
    <source>
    </source>
</evidence>
<evidence type="ECO:0000305" key="33">
    <source>
    </source>
</evidence>
<evidence type="ECO:0000312" key="34">
    <source>
        <dbReference type="HGNC" id="HGNC:10021"/>
    </source>
</evidence>
<evidence type="ECO:0007744" key="35">
    <source>
        <dbReference type="PDB" id="5V7Z"/>
    </source>
</evidence>
<evidence type="ECO:0007744" key="36">
    <source>
        <dbReference type="PDB" id="5ZCK"/>
    </source>
</evidence>
<evidence type="ECO:0007829" key="37">
    <source>
        <dbReference type="PDB" id="5V7Z"/>
    </source>
</evidence>
<evidence type="ECO:0007829" key="38">
    <source>
        <dbReference type="PDB" id="7DAC"/>
    </source>
</evidence>
<evidence type="ECO:0007829" key="39">
    <source>
        <dbReference type="PDB" id="7MON"/>
    </source>
</evidence>
<evidence type="ECO:0007829" key="40">
    <source>
        <dbReference type="PDB" id="7MX3"/>
    </source>
</evidence>
<name>RIPK3_HUMAN</name>
<proteinExistence type="evidence at protein level"/>
<sequence length="518" mass="56887">MSCVKLWPSGAPAPLVSIEELENQELVGKGGFGTVFRAQHRKWGYDVAVKIVNSKAISREVKAMASLDNEFVLRLEGVIEKVNWDQDPKPALVTKFMENGSLSGLLQSQCPRPWPLLCRLLKEVVLGMFYLHDQNPVLLHRDLKPSNVLLDPELHVKLADFGLSTFQGGSQSGTGSGEPGGTLGYLAPELFVNVNRKASTASDVYSFGILMWAVLAGREVELPTEPSLVYEAVCNRQNRPSLAELPQAGPETPGLEGLKELMQLCWSSEPKDRPSFQECLPKTDEVFQMVENNMNAAVSTVKDFLSQLRSSNRRFSIPESGQGGTEMDGFRRTIENQHSRNDVMVSEWLNKLNLEEPPSSVPKKCPSLTKRSRAQEEQVPQAWTAGTSSDSMAQPPQTPETSTFRNQMPSPTSTGTPSPGPRGNQGAERQGMNWSCRTPEPNPVTGRPLVNIYNCSGVQVGDNNYLTMQQTTALPTWGLAPSGKGRGLQHPPPVGSQEGPKDPEAWSRPQGWYNHSGK</sequence>
<gene>
    <name evidence="34" type="primary">RIPK3</name>
    <name evidence="25" type="synonym">RIP3</name>
</gene>
<reference key="1">
    <citation type="journal article" date="1999" name="Curr. Biol.">
        <title>Identification of RIP3, a RIP-like kinase that activates apoptosis and NFkappaB.</title>
        <authorList>
            <person name="Yu P.W."/>
            <person name="Huang B.C.B."/>
            <person name="Shen M."/>
            <person name="Quast J."/>
            <person name="Chan E."/>
            <person name="Xu X."/>
            <person name="Nolan G.P."/>
            <person name="Payan D.G."/>
            <person name="Luo Y."/>
        </authorList>
    </citation>
    <scope>NUCLEOTIDE SEQUENCE [MRNA] (ISOFORM 1)</scope>
    <scope>MUTAGENESIS OF LYS-50</scope>
    <scope>INTERACTION WITH RIPK1</scope>
    <source>
        <tissue>Cervix carcinoma</tissue>
        <tissue>Lymphocyte</tissue>
    </source>
</reference>
<reference key="2">
    <citation type="journal article" date="1999" name="J. Biol. Chem.">
        <title>RIP3, a novel apoptosis-inducing kinase.</title>
        <authorList>
            <person name="Sun X."/>
            <person name="Lee J."/>
            <person name="Navas T."/>
            <person name="Baldwin D.T."/>
            <person name="Stewart T.A."/>
            <person name="Dixit V.M."/>
        </authorList>
    </citation>
    <scope>NUCLEOTIDE SEQUENCE [MRNA] (ISOFORM 1)</scope>
    <scope>MUTAGENESIS OF LYS-50</scope>
    <source>
        <tissue>Aortic endothelium</tissue>
        <tissue>Fetal brain</tissue>
    </source>
</reference>
<reference key="3">
    <citation type="journal article" date="2005" name="Biochem. Biophys. Res. Commun.">
        <title>RIP3 beta and RIP3 gamma, two novel splice variants of receptor-interacting protein 3 (RIP3), downregulate RIP3-induced apoptosis.</title>
        <authorList>
            <person name="Yang Y."/>
            <person name="Hu W."/>
            <person name="Feng S."/>
            <person name="Ma J."/>
            <person name="Wu M."/>
        </authorList>
    </citation>
    <scope>NUCLEOTIDE SEQUENCE [MRNA] (ISOFORMS 1; 2 AND 3)</scope>
    <scope>TISSUE SPECIFICITY</scope>
</reference>
<reference key="4">
    <citation type="journal article" date="2003" name="Nature">
        <title>The DNA sequence and analysis of human chromosome 14.</title>
        <authorList>
            <person name="Heilig R."/>
            <person name="Eckenberg R."/>
            <person name="Petit J.-L."/>
            <person name="Fonknechten N."/>
            <person name="Da Silva C."/>
            <person name="Cattolico L."/>
            <person name="Levy M."/>
            <person name="Barbe V."/>
            <person name="De Berardinis V."/>
            <person name="Ureta-Vidal A."/>
            <person name="Pelletier E."/>
            <person name="Vico V."/>
            <person name="Anthouard V."/>
            <person name="Rowen L."/>
            <person name="Madan A."/>
            <person name="Qin S."/>
            <person name="Sun H."/>
            <person name="Du H."/>
            <person name="Pepin K."/>
            <person name="Artiguenave F."/>
            <person name="Robert C."/>
            <person name="Cruaud C."/>
            <person name="Bruels T."/>
            <person name="Jaillon O."/>
            <person name="Friedlander L."/>
            <person name="Samson G."/>
            <person name="Brottier P."/>
            <person name="Cure S."/>
            <person name="Segurens B."/>
            <person name="Aniere F."/>
            <person name="Samain S."/>
            <person name="Crespeau H."/>
            <person name="Abbasi N."/>
            <person name="Aiach N."/>
            <person name="Boscus D."/>
            <person name="Dickhoff R."/>
            <person name="Dors M."/>
            <person name="Dubois I."/>
            <person name="Friedman C."/>
            <person name="Gouyvenoux M."/>
            <person name="James R."/>
            <person name="Madan A."/>
            <person name="Mairey-Estrada B."/>
            <person name="Mangenot S."/>
            <person name="Martins N."/>
            <person name="Menard M."/>
            <person name="Oztas S."/>
            <person name="Ratcliffe A."/>
            <person name="Shaffer T."/>
            <person name="Trask B."/>
            <person name="Vacherie B."/>
            <person name="Bellemere C."/>
            <person name="Belser C."/>
            <person name="Besnard-Gonnet M."/>
            <person name="Bartol-Mavel D."/>
            <person name="Boutard M."/>
            <person name="Briez-Silla S."/>
            <person name="Combette S."/>
            <person name="Dufosse-Laurent V."/>
            <person name="Ferron C."/>
            <person name="Lechaplais C."/>
            <person name="Louesse C."/>
            <person name="Muselet D."/>
            <person name="Magdelenat G."/>
            <person name="Pateau E."/>
            <person name="Petit E."/>
            <person name="Sirvain-Trukniewicz P."/>
            <person name="Trybou A."/>
            <person name="Vega-Czarny N."/>
            <person name="Bataille E."/>
            <person name="Bluet E."/>
            <person name="Bordelais I."/>
            <person name="Dubois M."/>
            <person name="Dumont C."/>
            <person name="Guerin T."/>
            <person name="Haffray S."/>
            <person name="Hammadi R."/>
            <person name="Muanga J."/>
            <person name="Pellouin V."/>
            <person name="Robert D."/>
            <person name="Wunderle E."/>
            <person name="Gauguet G."/>
            <person name="Roy A."/>
            <person name="Sainte-Marthe L."/>
            <person name="Verdier J."/>
            <person name="Verdier-Discala C."/>
            <person name="Hillier L.W."/>
            <person name="Fulton L."/>
            <person name="McPherson J."/>
            <person name="Matsuda F."/>
            <person name="Wilson R."/>
            <person name="Scarpelli C."/>
            <person name="Gyapay G."/>
            <person name="Wincker P."/>
            <person name="Saurin W."/>
            <person name="Quetier F."/>
            <person name="Waterston R."/>
            <person name="Hood L."/>
            <person name="Weissenbach J."/>
        </authorList>
    </citation>
    <scope>NUCLEOTIDE SEQUENCE [LARGE SCALE GENOMIC DNA]</scope>
</reference>
<reference key="5">
    <citation type="journal article" date="2004" name="Nat. Genet.">
        <title>Complete sequencing and characterization of 21,243 full-length human cDNAs.</title>
        <authorList>
            <person name="Ota T."/>
            <person name="Suzuki Y."/>
            <person name="Nishikawa T."/>
            <person name="Otsuki T."/>
            <person name="Sugiyama T."/>
            <person name="Irie R."/>
            <person name="Wakamatsu A."/>
            <person name="Hayashi K."/>
            <person name="Sato H."/>
            <person name="Nagai K."/>
            <person name="Kimura K."/>
            <person name="Makita H."/>
            <person name="Sekine M."/>
            <person name="Obayashi M."/>
            <person name="Nishi T."/>
            <person name="Shibahara T."/>
            <person name="Tanaka T."/>
            <person name="Ishii S."/>
            <person name="Yamamoto J."/>
            <person name="Saito K."/>
            <person name="Kawai Y."/>
            <person name="Isono Y."/>
            <person name="Nakamura Y."/>
            <person name="Nagahari K."/>
            <person name="Murakami K."/>
            <person name="Yasuda T."/>
            <person name="Iwayanagi T."/>
            <person name="Wagatsuma M."/>
            <person name="Shiratori A."/>
            <person name="Sudo H."/>
            <person name="Hosoiri T."/>
            <person name="Kaku Y."/>
            <person name="Kodaira H."/>
            <person name="Kondo H."/>
            <person name="Sugawara M."/>
            <person name="Takahashi M."/>
            <person name="Kanda K."/>
            <person name="Yokoi T."/>
            <person name="Furuya T."/>
            <person name="Kikkawa E."/>
            <person name="Omura Y."/>
            <person name="Abe K."/>
            <person name="Kamihara K."/>
            <person name="Katsuta N."/>
            <person name="Sato K."/>
            <person name="Tanikawa M."/>
            <person name="Yamazaki M."/>
            <person name="Ninomiya K."/>
            <person name="Ishibashi T."/>
            <person name="Yamashita H."/>
            <person name="Murakawa K."/>
            <person name="Fujimori K."/>
            <person name="Tanai H."/>
            <person name="Kimata M."/>
            <person name="Watanabe M."/>
            <person name="Hiraoka S."/>
            <person name="Chiba Y."/>
            <person name="Ishida S."/>
            <person name="Ono Y."/>
            <person name="Takiguchi S."/>
            <person name="Watanabe S."/>
            <person name="Yosida M."/>
            <person name="Hotuta T."/>
            <person name="Kusano J."/>
            <person name="Kanehori K."/>
            <person name="Takahashi-Fujii A."/>
            <person name="Hara H."/>
            <person name="Tanase T.-O."/>
            <person name="Nomura Y."/>
            <person name="Togiya S."/>
            <person name="Komai F."/>
            <person name="Hara R."/>
            <person name="Takeuchi K."/>
            <person name="Arita M."/>
            <person name="Imose N."/>
            <person name="Musashino K."/>
            <person name="Yuuki H."/>
            <person name="Oshima A."/>
            <person name="Sasaki N."/>
            <person name="Aotsuka S."/>
            <person name="Yoshikawa Y."/>
            <person name="Matsunawa H."/>
            <person name="Ichihara T."/>
            <person name="Shiohata N."/>
            <person name="Sano S."/>
            <person name="Moriya S."/>
            <person name="Momiyama H."/>
            <person name="Satoh N."/>
            <person name="Takami S."/>
            <person name="Terashima Y."/>
            <person name="Suzuki O."/>
            <person name="Nakagawa S."/>
            <person name="Senoh A."/>
            <person name="Mizoguchi H."/>
            <person name="Goto Y."/>
            <person name="Shimizu F."/>
            <person name="Wakebe H."/>
            <person name="Hishigaki H."/>
            <person name="Watanabe T."/>
            <person name="Sugiyama A."/>
            <person name="Takemoto M."/>
            <person name="Kawakami B."/>
            <person name="Yamazaki M."/>
            <person name="Watanabe K."/>
            <person name="Kumagai A."/>
            <person name="Itakura S."/>
            <person name="Fukuzumi Y."/>
            <person name="Fujimori Y."/>
            <person name="Komiyama M."/>
            <person name="Tashiro H."/>
            <person name="Tanigami A."/>
            <person name="Fujiwara T."/>
            <person name="Ono T."/>
            <person name="Yamada K."/>
            <person name="Fujii Y."/>
            <person name="Ozaki K."/>
            <person name="Hirao M."/>
            <person name="Ohmori Y."/>
            <person name="Kawabata A."/>
            <person name="Hikiji T."/>
            <person name="Kobatake N."/>
            <person name="Inagaki H."/>
            <person name="Ikema Y."/>
            <person name="Okamoto S."/>
            <person name="Okitani R."/>
            <person name="Kawakami T."/>
            <person name="Noguchi S."/>
            <person name="Itoh T."/>
            <person name="Shigeta K."/>
            <person name="Senba T."/>
            <person name="Matsumura K."/>
            <person name="Nakajima Y."/>
            <person name="Mizuno T."/>
            <person name="Morinaga M."/>
            <person name="Sasaki M."/>
            <person name="Togashi T."/>
            <person name="Oyama M."/>
            <person name="Hata H."/>
            <person name="Watanabe M."/>
            <person name="Komatsu T."/>
            <person name="Mizushima-Sugano J."/>
            <person name="Satoh T."/>
            <person name="Shirai Y."/>
            <person name="Takahashi Y."/>
            <person name="Nakagawa K."/>
            <person name="Okumura K."/>
            <person name="Nagase T."/>
            <person name="Nomura N."/>
            <person name="Kikuchi H."/>
            <person name="Masuho Y."/>
            <person name="Yamashita R."/>
            <person name="Nakai K."/>
            <person name="Yada T."/>
            <person name="Nakamura Y."/>
            <person name="Ohara O."/>
            <person name="Isogai T."/>
            <person name="Sugano S."/>
        </authorList>
    </citation>
    <scope>NUCLEOTIDE SEQUENCE [LARGE SCALE MRNA] (ISOFORM 3)</scope>
    <source>
        <tissue>Thalamus</tissue>
    </source>
</reference>
<reference key="6">
    <citation type="submission" date="2005-09" db="EMBL/GenBank/DDBJ databases">
        <authorList>
            <person name="Mural R.J."/>
            <person name="Istrail S."/>
            <person name="Sutton G.G."/>
            <person name="Florea L."/>
            <person name="Halpern A.L."/>
            <person name="Mobarry C.M."/>
            <person name="Lippert R."/>
            <person name="Walenz B."/>
            <person name="Shatkay H."/>
            <person name="Dew I."/>
            <person name="Miller J.R."/>
            <person name="Flanigan M.J."/>
            <person name="Edwards N.J."/>
            <person name="Bolanos R."/>
            <person name="Fasulo D."/>
            <person name="Halldorsson B.V."/>
            <person name="Hannenhalli S."/>
            <person name="Turner R."/>
            <person name="Yooseph S."/>
            <person name="Lu F."/>
            <person name="Nusskern D.R."/>
            <person name="Shue B.C."/>
            <person name="Zheng X.H."/>
            <person name="Zhong F."/>
            <person name="Delcher A.L."/>
            <person name="Huson D.H."/>
            <person name="Kravitz S.A."/>
            <person name="Mouchard L."/>
            <person name="Reinert K."/>
            <person name="Remington K.A."/>
            <person name="Clark A.G."/>
            <person name="Waterman M.S."/>
            <person name="Eichler E.E."/>
            <person name="Adams M.D."/>
            <person name="Hunkapiller M.W."/>
            <person name="Myers E.W."/>
            <person name="Venter J.C."/>
        </authorList>
    </citation>
    <scope>NUCLEOTIDE SEQUENCE [LARGE SCALE GENOMIC DNA]</scope>
</reference>
<reference key="7">
    <citation type="journal article" date="2004" name="Genome Res.">
        <title>The status, quality, and expansion of the NIH full-length cDNA project: the Mammalian Gene Collection (MGC).</title>
        <authorList>
            <consortium name="The MGC Project Team"/>
        </authorList>
    </citation>
    <scope>NUCLEOTIDE SEQUENCE [LARGE SCALE MRNA] (ISOFORM 1)</scope>
    <source>
        <tissue>Blood</tissue>
    </source>
</reference>
<reference key="8">
    <citation type="journal article" date="2002" name="J. Biol. Chem.">
        <title>Identification of a novel homotypic interaction motif required for the phosphorylation of receptor-interacting protein (RIP) by RIP3.</title>
        <authorList>
            <person name="Sun X."/>
            <person name="Yin J."/>
            <person name="Starovasnik M.A."/>
            <person name="Fairbrother W.J."/>
            <person name="Dixit V.M."/>
        </authorList>
    </citation>
    <scope>RIP HOMOTYPIC INTERACTION MOTIF</scope>
    <scope>PHOSPHORYLATION AT SER-199</scope>
    <scope>INTERACTION WITH RIPK1</scope>
</reference>
<reference key="9">
    <citation type="journal article" date="2009" name="Science">
        <title>RIP3, an energy metabolism regulator that switches TNF-induced cell death from apoptosis to necrosis.</title>
        <authorList>
            <person name="Zhang D.W."/>
            <person name="Shao J."/>
            <person name="Lin J."/>
            <person name="Zhang N."/>
            <person name="Lu B.J."/>
            <person name="Lin S.C."/>
            <person name="Dong M.Q."/>
            <person name="Han J."/>
        </authorList>
    </citation>
    <scope>FUNCTION</scope>
    <scope>INTERACTION WITH PYGL; GLUL AND GLUD1</scope>
</reference>
<reference key="10">
    <citation type="journal article" date="2009" name="Cell">
        <title>Receptor interacting protein kinase-3 determines cellular necrotic response to TNF-alpha.</title>
        <authorList>
            <person name="He S."/>
            <person name="Wang L."/>
            <person name="Miao L."/>
            <person name="Wang T."/>
            <person name="Du F."/>
            <person name="Zhao L."/>
            <person name="Wang X."/>
        </authorList>
    </citation>
    <scope>FUNCTION</scope>
    <scope>PHOSPHORYLATION AT SER-199</scope>
    <scope>INTERACTION WITH RIPK1</scope>
</reference>
<reference key="11">
    <citation type="journal article" date="2009" name="Cell">
        <title>Phosphorylation-driven assembly of the RIP1-RIP3 complex regulates programmed necrosis and virus-induced inflammation.</title>
        <authorList>
            <person name="Cho Y.S."/>
            <person name="Challa S."/>
            <person name="Moquin D."/>
            <person name="Genga R."/>
            <person name="Ray T.D."/>
            <person name="Guildford M."/>
            <person name="Chan F.K."/>
        </authorList>
    </citation>
    <scope>FUNCTION</scope>
    <scope>PHOSPHORYLATION</scope>
</reference>
<reference key="12">
    <citation type="journal article" date="2010" name="Sci. Signal.">
        <title>The role of the kinases RIP1 and RIP3 in TNF-induced necrosis.</title>
        <authorList>
            <person name="Vandenabeele P."/>
            <person name="Declercq W."/>
            <person name="Van Herreweghe F."/>
            <person name="Vanden Berghe T."/>
        </authorList>
    </citation>
    <scope>REVIEW</scope>
</reference>
<reference key="13">
    <citation type="journal article" date="2011" name="PLoS ONE">
        <title>cIAP1/2 are direct E3 ligases conjugating diverse types of ubiquitin chains to receptor interacting proteins kinases 1 to 4 (RIP1-4).</title>
        <authorList>
            <person name="Bertrand M.J."/>
            <person name="Lippens S."/>
            <person name="Staes A."/>
            <person name="Gilbert B."/>
            <person name="Roelandt R."/>
            <person name="De Medts J."/>
            <person name="Gevaert K."/>
            <person name="Declercq W."/>
            <person name="Vandenabeele P."/>
        </authorList>
    </citation>
    <scope>UBIQUITINATION BY BIRC2/C-IAP1 AND BIRC3/C-IAP2</scope>
    <scope>INTERACTION WITH BIRC2/C-IAP1; BIRC3/C-IAP2 AND XIAP/BIRC4</scope>
</reference>
<reference key="14">
    <citation type="journal article" date="2012" name="Cell">
        <title>Mixed lineage kinase domain-like protein mediates necrosis signaling downstream of RIP3 kinase.</title>
        <authorList>
            <person name="Sun L."/>
            <person name="Wang H."/>
            <person name="Wang Z."/>
            <person name="He S."/>
            <person name="Chen S."/>
            <person name="Liao D."/>
            <person name="Wang L."/>
            <person name="Yan J."/>
            <person name="Liu W."/>
            <person name="Lei X."/>
            <person name="Wang X."/>
        </authorList>
    </citation>
    <scope>FUNCTION</scope>
    <scope>SUBCELLULAR LOCATION</scope>
    <scope>INTERACTION WITH MLKL</scope>
    <scope>PHOSPHORYLATION AT SER-227</scope>
    <scope>ACTIVE SITE</scope>
    <scope>MUTAGENESIS OF ASP-142 AND SER-227</scope>
</reference>
<reference key="15">
    <citation type="journal article" date="2012" name="Cell">
        <title>The mitochondrial phosphatase PGAM5 functions at the convergence point of multiple necrotic death pathways.</title>
        <authorList>
            <person name="Wang Z."/>
            <person name="Jiang H."/>
            <person name="Chen S."/>
            <person name="Du F."/>
            <person name="Wang X."/>
        </authorList>
    </citation>
    <scope>FUNCTION</scope>
    <scope>IDENTIFICATION IN COMPLEX WITH PGAM5; RIPK1 AND MLKL</scope>
    <scope>MUTAGENESIS OF LYS-50</scope>
</reference>
<reference key="16">
    <citation type="journal article" date="2012" name="Inflamm. Bowel Dis.">
        <title>Control of NOD2 and Rip2-dependent innate immune activation by GEF-H1.</title>
        <authorList>
            <person name="Zhao Y."/>
            <person name="Alonso C."/>
            <person name="Ballester I."/>
            <person name="Song J.H."/>
            <person name="Chang S.Y."/>
            <person name="Guleng B."/>
            <person name="Arihiro S."/>
            <person name="Murray P.J."/>
            <person name="Xavier R."/>
            <person name="Kobayashi K.S."/>
            <person name="Reinecker H.C."/>
        </authorList>
    </citation>
    <scope>INTERACTION WITH ARHGEF2</scope>
</reference>
<reference key="17">
    <citation type="journal article" date="2012" name="Proc. Natl. Acad. Sci. U.S.A.">
        <title>Mixed lineage kinase domain-like is a key receptor interacting protein 3 downstream component of TNF-induced necrosis.</title>
        <authorList>
            <person name="Zhao J."/>
            <person name="Jitkaew S."/>
            <person name="Cai Z."/>
            <person name="Choksi S."/>
            <person name="Li Q."/>
            <person name="Luo J."/>
            <person name="Liu Z.G."/>
        </authorList>
    </citation>
    <scope>FUNCTION</scope>
    <scope>INTERACTION WITH MLKL</scope>
</reference>
<reference key="18">
    <citation type="journal article" date="2014" name="Proc. Natl. Acad. Sci. U.S.A.">
        <title>Direct activation of RIP3/MLKL-dependent necrosis by herpes simplex virus 1 (HSV-1) protein ICP6 triggers host antiviral defense.</title>
        <authorList>
            <person name="Wang X."/>
            <person name="Li Y."/>
            <person name="Liu S."/>
            <person name="Yu X."/>
            <person name="Li L."/>
            <person name="Shi C."/>
            <person name="He W."/>
            <person name="Li J."/>
            <person name="Xu L."/>
            <person name="Hu Z."/>
            <person name="Yu L."/>
            <person name="Yang Z."/>
            <person name="Chen Q."/>
            <person name="Ge L."/>
            <person name="Zhang Z."/>
            <person name="Zhou B."/>
            <person name="Jiang X."/>
            <person name="Chen S."/>
            <person name="He S."/>
        </authorList>
    </citation>
    <scope>FUNCTION</scope>
    <scope>INTERACTION WITH HUMAN HERPESVIRUS PROTEIN 1 RIR1 (MICROBIAL INFECTION)</scope>
</reference>
<reference key="19">
    <citation type="journal article" date="2015" name="Cell Host Microbe">
        <title>Herpes simplex virus suppresses necroptosis in human cells.</title>
        <authorList>
            <person name="Guo H."/>
            <person name="Omoto S."/>
            <person name="Harris P.A."/>
            <person name="Finger J.N."/>
            <person name="Bertin J."/>
            <person name="Gough P.J."/>
            <person name="Kaiser W.J."/>
            <person name="Mocarski E.S."/>
        </authorList>
    </citation>
    <scope>INTERACTION WITH HERPES SIMPLEX VIRUS 1 AND 2 PROTEIN RIR1 (MICROBIAL INFECTION)</scope>
</reference>
<reference key="20">
    <citation type="journal article" date="2018" name="Mol. Cell">
        <title>PELI1 selectively targets kinase-active RIP3 for ubiquitylation-dependent proteasomal degradation.</title>
        <authorList>
            <person name="Choi S.W."/>
            <person name="Park H.H."/>
            <person name="Kim S."/>
            <person name="Chung J.M."/>
            <person name="Noh H.J."/>
            <person name="Kim S.K."/>
            <person name="Song H.K."/>
            <person name="Lee C.W."/>
            <person name="Morgan M.J."/>
            <person name="Kang H.C."/>
            <person name="Kim Y.S."/>
        </authorList>
    </citation>
    <scope>FUNCTION</scope>
    <scope>UBIQUITINATION AT LYS-363</scope>
    <scope>PROTEASOMAL DEGRADATION</scope>
    <scope>MUTAGENESIS OF LYS-50; THR-182; TYR-185; SER-227 AND LYS-363</scope>
    <scope>INTERACTION WITH PELI1; STUB1; RIPK1; TRAF2; MLKL AND BUB1B</scope>
    <scope>PHOSPHORYLATION AT THR-182 AND SER-227</scope>
</reference>
<reference key="21">
    <citation type="journal article" date="2020" name="Cell">
        <title>Caspase-6 is a key regulator of innate immunity, inflammasome activation, and host defense.</title>
        <authorList>
            <person name="Zheng M."/>
            <person name="Karki R."/>
            <person name="Vogel P."/>
            <person name="Kanneganti T.D."/>
        </authorList>
    </citation>
    <scope>FUNCTION</scope>
    <scope>INTERACTION WITH CASP6</scope>
</reference>
<reference key="22">
    <citation type="journal article" date="2020" name="EMBO J.">
        <title>A unique bacterial tactic to circumvent the cell death crosstalk induced by blockade of caspase-8.</title>
        <authorList>
            <person name="Ashida H."/>
            <person name="Sasakawa C."/>
            <person name="Suzuki T."/>
        </authorList>
    </citation>
    <scope>FUNCTION</scope>
    <scope>PROTEOLYTIC CLEAVAGE (MICROBIAL INFECTION)</scope>
    <scope>MUTAGENESIS OF 458-VAL--GLY-461</scope>
</reference>
<reference key="23">
    <citation type="journal article" date="2021" name="Biophys. Chem.">
        <title>Herpes simplex virus encoded ICP6 protein forms functional amyloid assemblies with necroptosis-associated host proteins.</title>
        <authorList>
            <person name="Shanmugam N."/>
            <person name="Baker M.O.D.G."/>
            <person name="Sanz-Hernandez M."/>
            <person name="Sierecki E."/>
            <person name="Gambin Y."/>
            <person name="Steain M."/>
            <person name="Pham C.L.L."/>
            <person name="Sunde M."/>
        </authorList>
    </citation>
    <scope>FUNCTION (MICROBIAL INFECTION)</scope>
    <scope>INTERACTION WITH HHV-1 PROTEIN RIR1 (MICROBIAL INFECTION)</scope>
    <scope>DOMAIN (MICROBIAL INFECTION)</scope>
</reference>
<reference key="24">
    <citation type="journal article" date="2021" name="EMBO Rep.">
        <title>USP22 controls necroptosis by regulating receptor-interacting protein kinase 3 ubiquitination.</title>
        <authorList>
            <person name="Roedig J."/>
            <person name="Kowald L."/>
            <person name="Juretschke T."/>
            <person name="Karlowitz R."/>
            <person name="Ahangarian Abhari B."/>
            <person name="Roedig H."/>
            <person name="Fulda S."/>
            <person name="Beli P."/>
            <person name="van Wijk S.J."/>
        </authorList>
    </citation>
    <scope>FUNCTION</scope>
    <scope>DEUBIQUITINATION BY USP22</scope>
    <scope>MUTAGENESIS OF LYS-518</scope>
    <scope>UBIQUITINATION AT LYS-42; LYS-351 AND LYS-518</scope>
</reference>
<reference key="25">
    <citation type="journal article" date="2007" name="Nature">
        <title>Patterns of somatic mutation in human cancer genomes.</title>
        <authorList>
            <person name="Greenman C."/>
            <person name="Stephens P."/>
            <person name="Smith R."/>
            <person name="Dalgliesh G.L."/>
            <person name="Hunter C."/>
            <person name="Bignell G."/>
            <person name="Davies H."/>
            <person name="Teague J."/>
            <person name="Butler A."/>
            <person name="Stevens C."/>
            <person name="Edkins S."/>
            <person name="O'Meara S."/>
            <person name="Vastrik I."/>
            <person name="Schmidt E.E."/>
            <person name="Avis T."/>
            <person name="Barthorpe S."/>
            <person name="Bhamra G."/>
            <person name="Buck G."/>
            <person name="Choudhury B."/>
            <person name="Clements J."/>
            <person name="Cole J."/>
            <person name="Dicks E."/>
            <person name="Forbes S."/>
            <person name="Gray K."/>
            <person name="Halliday K."/>
            <person name="Harrison R."/>
            <person name="Hills K."/>
            <person name="Hinton J."/>
            <person name="Jenkinson A."/>
            <person name="Jones D."/>
            <person name="Menzies A."/>
            <person name="Mironenko T."/>
            <person name="Perry J."/>
            <person name="Raine K."/>
            <person name="Richardson D."/>
            <person name="Shepherd R."/>
            <person name="Small A."/>
            <person name="Tofts C."/>
            <person name="Varian J."/>
            <person name="Webb T."/>
            <person name="West S."/>
            <person name="Widaa S."/>
            <person name="Yates A."/>
            <person name="Cahill D.P."/>
            <person name="Louis D.N."/>
            <person name="Goldstraw P."/>
            <person name="Nicholson A.G."/>
            <person name="Brasseur F."/>
            <person name="Looijenga L."/>
            <person name="Weber B.L."/>
            <person name="Chiew Y.-E."/>
            <person name="DeFazio A."/>
            <person name="Greaves M.F."/>
            <person name="Green A.R."/>
            <person name="Campbell P."/>
            <person name="Birney E."/>
            <person name="Easton D.F."/>
            <person name="Chenevix-Trench G."/>
            <person name="Tan M.-H."/>
            <person name="Khoo S.K."/>
            <person name="Teh B.T."/>
            <person name="Yuen S.T."/>
            <person name="Leung S.Y."/>
            <person name="Wooster R."/>
            <person name="Futreal P.A."/>
            <person name="Stratton M.R."/>
        </authorList>
    </citation>
    <scope>VARIANTS [LARGE SCALE ANALYSIS] MET-300 AND GLN-492</scope>
</reference>
<reference evidence="35 36" key="26">
    <citation type="journal article" date="2018" name="Cell">
        <title>The structure of the necrosome RIPK1-RIPK3 core, a human hetero-amyloid signaling complex.</title>
        <authorList>
            <person name="Mompean M."/>
            <person name="Li W."/>
            <person name="Li J."/>
            <person name="Laage S."/>
            <person name="Siemer A.B."/>
            <person name="Bozkurt G."/>
            <person name="Wu H."/>
            <person name="McDermott A.E."/>
        </authorList>
    </citation>
    <scope>STRUCTURE BY NMR OF 448-462 IN COMPLEX WITH RIPK1</scope>
    <scope>X-RAY CRYSTALLOGRAPHY (1.27 ANGSTROMS) OF 458-461 IN COMPLEX WITH RIPK1</scope>
    <scope>INTERACTION WITH RIPK1</scope>
    <scope>DOMAIN</scope>
</reference>
<dbReference type="EC" id="2.7.11.1" evidence="11 14"/>
<dbReference type="EMBL" id="AF156884">
    <property type="protein sequence ID" value="AAD39005.1"/>
    <property type="molecule type" value="mRNA"/>
</dbReference>
<dbReference type="EMBL" id="AY453693">
    <property type="protein sequence ID" value="AAS16359.1"/>
    <property type="molecule type" value="mRNA"/>
</dbReference>
<dbReference type="EMBL" id="AY494982">
    <property type="protein sequence ID" value="AAS75516.1"/>
    <property type="molecule type" value="mRNA"/>
</dbReference>
<dbReference type="EMBL" id="AY494983">
    <property type="protein sequence ID" value="AAS75517.1"/>
    <property type="molecule type" value="mRNA"/>
</dbReference>
<dbReference type="EMBL" id="AL096870">
    <property type="status" value="NOT_ANNOTATED_CDS"/>
    <property type="molecule type" value="Genomic_DNA"/>
</dbReference>
<dbReference type="EMBL" id="AK296140">
    <property type="protein sequence ID" value="BAG58881.1"/>
    <property type="molecule type" value="mRNA"/>
</dbReference>
<dbReference type="EMBL" id="CH471078">
    <property type="protein sequence ID" value="EAW66021.1"/>
    <property type="molecule type" value="Genomic_DNA"/>
</dbReference>
<dbReference type="EMBL" id="BC062584">
    <property type="protein sequence ID" value="AAH62584.1"/>
    <property type="molecule type" value="mRNA"/>
</dbReference>
<dbReference type="CCDS" id="CCDS9628.1">
    <molecule id="Q9Y572-1"/>
</dbReference>
<dbReference type="RefSeq" id="NP_006862.2">
    <molecule id="Q9Y572-1"/>
    <property type="nucleotide sequence ID" value="NM_006871.3"/>
</dbReference>
<dbReference type="PDB" id="5V7Z">
    <property type="method" value="NMR"/>
    <property type="chains" value="A/C/E/G=448-462"/>
</dbReference>
<dbReference type="PDB" id="5ZCK">
    <property type="method" value="X-ray"/>
    <property type="resolution" value="1.27 A"/>
    <property type="chains" value="A=458-461"/>
</dbReference>
<dbReference type="PDB" id="7DA4">
    <property type="method" value="EM"/>
    <property type="resolution" value="4.24 A"/>
    <property type="chains" value="A/B/C=388-518"/>
</dbReference>
<dbReference type="PDB" id="7DAC">
    <property type="method" value="NMR"/>
    <property type="chains" value="A/B/C/D/E=418-518"/>
</dbReference>
<dbReference type="PDB" id="7MON">
    <property type="method" value="X-ray"/>
    <property type="resolution" value="2.23 A"/>
    <property type="chains" value="B=1-316"/>
</dbReference>
<dbReference type="PDB" id="7MX3">
    <property type="method" value="X-ray"/>
    <property type="resolution" value="3.23 A"/>
    <property type="chains" value="A/B/C/D=2-315"/>
</dbReference>
<dbReference type="PDBsum" id="5V7Z"/>
<dbReference type="PDBsum" id="5ZCK"/>
<dbReference type="PDBsum" id="7DA4"/>
<dbReference type="PDBsum" id="7DAC"/>
<dbReference type="PDBsum" id="7MON"/>
<dbReference type="PDBsum" id="7MX3"/>
<dbReference type="EMDB" id="EMD-30622"/>
<dbReference type="SMR" id="Q9Y572"/>
<dbReference type="BioGRID" id="116224">
    <property type="interactions" value="68"/>
</dbReference>
<dbReference type="CORUM" id="Q9Y572"/>
<dbReference type="DIP" id="DIP-27519N"/>
<dbReference type="FunCoup" id="Q9Y572">
    <property type="interactions" value="491"/>
</dbReference>
<dbReference type="IntAct" id="Q9Y572">
    <property type="interactions" value="24"/>
</dbReference>
<dbReference type="MINT" id="Q9Y572"/>
<dbReference type="STRING" id="9606.ENSP00000216274"/>
<dbReference type="BindingDB" id="Q9Y572"/>
<dbReference type="ChEMBL" id="CHEMBL1795199"/>
<dbReference type="DrugCentral" id="Q9Y572"/>
<dbReference type="GuidetoPHARMACOLOGY" id="2191"/>
<dbReference type="TCDB" id="8.A.23.1.52">
    <property type="family name" value="the basigin (basigin) family"/>
</dbReference>
<dbReference type="GlyCosmos" id="Q9Y572">
    <property type="glycosylation" value="1 site, 1 glycan"/>
</dbReference>
<dbReference type="GlyGen" id="Q9Y572">
    <property type="glycosylation" value="3 sites, 1 O-linked glycan (2 sites)"/>
</dbReference>
<dbReference type="iPTMnet" id="Q9Y572"/>
<dbReference type="PhosphoSitePlus" id="Q9Y572"/>
<dbReference type="BioMuta" id="RIPK3"/>
<dbReference type="DMDM" id="205371831"/>
<dbReference type="CPTAC" id="CPTAC-903"/>
<dbReference type="CPTAC" id="CPTAC-904"/>
<dbReference type="jPOST" id="Q9Y572"/>
<dbReference type="MassIVE" id="Q9Y572"/>
<dbReference type="PaxDb" id="9606-ENSP00000216274"/>
<dbReference type="PeptideAtlas" id="Q9Y572"/>
<dbReference type="ProteomicsDB" id="86299">
    <molecule id="Q9Y572-1"/>
</dbReference>
<dbReference type="ProteomicsDB" id="86300">
    <molecule id="Q9Y572-2"/>
</dbReference>
<dbReference type="ProteomicsDB" id="86301">
    <molecule id="Q9Y572-3"/>
</dbReference>
<dbReference type="ABCD" id="Q9Y572">
    <property type="antibodies" value="2 sequenced antibodies"/>
</dbReference>
<dbReference type="Antibodypedia" id="9228">
    <property type="antibodies" value="921 antibodies from 47 providers"/>
</dbReference>
<dbReference type="DNASU" id="11035"/>
<dbReference type="Ensembl" id="ENST00000216274.10">
    <molecule id="Q9Y572-1"/>
    <property type="protein sequence ID" value="ENSP00000216274.5"/>
    <property type="gene ID" value="ENSG00000129465.16"/>
</dbReference>
<dbReference type="Ensembl" id="ENST00000554756.1">
    <molecule id="Q9Y572-3"/>
    <property type="protein sequence ID" value="ENSP00000452328.1"/>
    <property type="gene ID" value="ENSG00000129465.16"/>
</dbReference>
<dbReference type="Ensembl" id="ENST00000643393.1">
    <molecule id="Q9Y572-3"/>
    <property type="protein sequence ID" value="ENSP00000495915.1"/>
    <property type="gene ID" value="ENSG00000285379.2"/>
</dbReference>
<dbReference type="Ensembl" id="ENST00000646516.2">
    <molecule id="Q9Y572-1"/>
    <property type="protein sequence ID" value="ENSP00000495490.1"/>
    <property type="gene ID" value="ENSG00000285379.2"/>
</dbReference>
<dbReference type="GeneID" id="11035"/>
<dbReference type="KEGG" id="hsa:11035"/>
<dbReference type="MANE-Select" id="ENST00000216274.10">
    <property type="protein sequence ID" value="ENSP00000216274.5"/>
    <property type="RefSeq nucleotide sequence ID" value="NM_006871.4"/>
    <property type="RefSeq protein sequence ID" value="NP_006862.2"/>
</dbReference>
<dbReference type="UCSC" id="uc001wpb.4">
    <molecule id="Q9Y572-1"/>
    <property type="organism name" value="human"/>
</dbReference>
<dbReference type="AGR" id="HGNC:10021"/>
<dbReference type="CTD" id="11035"/>
<dbReference type="DisGeNET" id="11035"/>
<dbReference type="GeneCards" id="RIPK3"/>
<dbReference type="HGNC" id="HGNC:10021">
    <property type="gene designation" value="RIPK3"/>
</dbReference>
<dbReference type="HPA" id="ENSG00000129465">
    <property type="expression patterns" value="Low tissue specificity"/>
</dbReference>
<dbReference type="MIM" id="605817">
    <property type="type" value="gene"/>
</dbReference>
<dbReference type="neXtProt" id="NX_Q9Y572"/>
<dbReference type="OpenTargets" id="ENSG00000129465"/>
<dbReference type="PharmGKB" id="PA34396"/>
<dbReference type="VEuPathDB" id="HostDB:ENSG00000129465"/>
<dbReference type="eggNOG" id="KOG0192">
    <property type="taxonomic scope" value="Eukaryota"/>
</dbReference>
<dbReference type="GeneTree" id="ENSGT00940000160206"/>
<dbReference type="HOGENOM" id="CLU_559689_0_0_1"/>
<dbReference type="InParanoid" id="Q9Y572"/>
<dbReference type="OMA" id="WDYVSGP"/>
<dbReference type="OrthoDB" id="4062651at2759"/>
<dbReference type="PAN-GO" id="Q9Y572">
    <property type="GO annotations" value="3 GO annotations based on evolutionary models"/>
</dbReference>
<dbReference type="PhylomeDB" id="Q9Y572"/>
<dbReference type="TreeFam" id="TF106506"/>
<dbReference type="BRENDA" id="2.7.10.2">
    <property type="organism ID" value="2681"/>
</dbReference>
<dbReference type="PathwayCommons" id="Q9Y572"/>
<dbReference type="Reactome" id="R-HSA-168927">
    <property type="pathway name" value="TICAM1, RIP1-mediated IKK complex recruitment"/>
</dbReference>
<dbReference type="Reactome" id="R-HSA-1810476">
    <property type="pathway name" value="RIP-mediated NFkB activation via ZBP1"/>
</dbReference>
<dbReference type="Reactome" id="R-HSA-2562578">
    <property type="pathway name" value="TRIF-mediated programmed cell death"/>
</dbReference>
<dbReference type="Reactome" id="R-HSA-3295583">
    <property type="pathway name" value="TRP channels"/>
</dbReference>
<dbReference type="Reactome" id="R-HSA-5213460">
    <property type="pathway name" value="RIPK1-mediated regulated necrosis"/>
</dbReference>
<dbReference type="Reactome" id="R-HSA-5675482">
    <property type="pathway name" value="Regulation of necroptotic cell death"/>
</dbReference>
<dbReference type="Reactome" id="R-HSA-9013957">
    <property type="pathway name" value="TLR3-mediated TICAM1-dependent programmed cell death"/>
</dbReference>
<dbReference type="Reactome" id="R-HSA-937041">
    <property type="pathway name" value="IKK complex recruitment mediated by RIP1"/>
</dbReference>
<dbReference type="Reactome" id="R-HSA-9686347">
    <property type="pathway name" value="Microbial modulation of RIPK1-mediated regulated necrosis"/>
</dbReference>
<dbReference type="Reactome" id="R-HSA-9692913">
    <property type="pathway name" value="SARS-CoV-1-mediated effects on programmed cell death"/>
</dbReference>
<dbReference type="Reactome" id="R-HSA-9692916">
    <property type="pathway name" value="SARS-CoV-1 activates/modulates innate immune responses"/>
</dbReference>
<dbReference type="SignaLink" id="Q9Y572"/>
<dbReference type="SIGNOR" id="Q9Y572"/>
<dbReference type="BioGRID-ORCS" id="11035">
    <property type="hits" value="35 hits in 1194 CRISPR screens"/>
</dbReference>
<dbReference type="ChiTaRS" id="RIPK3">
    <property type="organism name" value="human"/>
</dbReference>
<dbReference type="GeneWiki" id="RIPK3"/>
<dbReference type="GenomeRNAi" id="11035"/>
<dbReference type="Pharos" id="Q9Y572">
    <property type="development level" value="Tchem"/>
</dbReference>
<dbReference type="PRO" id="PR:Q9Y572"/>
<dbReference type="Proteomes" id="UP000005640">
    <property type="component" value="Chromosome 14"/>
</dbReference>
<dbReference type="RNAct" id="Q9Y572">
    <property type="molecule type" value="protein"/>
</dbReference>
<dbReference type="Bgee" id="ENSG00000129465">
    <property type="expression patterns" value="Expressed in granulocyte and 93 other cell types or tissues"/>
</dbReference>
<dbReference type="ExpressionAtlas" id="Q9Y572">
    <property type="expression patterns" value="baseline and differential"/>
</dbReference>
<dbReference type="GO" id="GO:0005737">
    <property type="term" value="C:cytoplasm"/>
    <property type="evidence" value="ECO:0000318"/>
    <property type="project" value="GO_Central"/>
</dbReference>
<dbReference type="GO" id="GO:0005829">
    <property type="term" value="C:cytosol"/>
    <property type="evidence" value="ECO:0000314"/>
    <property type="project" value="UniProtKB"/>
</dbReference>
<dbReference type="GO" id="GO:0005634">
    <property type="term" value="C:nucleus"/>
    <property type="evidence" value="ECO:0000314"/>
    <property type="project" value="UniProt"/>
</dbReference>
<dbReference type="GO" id="GO:0032991">
    <property type="term" value="C:protein-containing complex"/>
    <property type="evidence" value="ECO:0000314"/>
    <property type="project" value="UniProtKB"/>
</dbReference>
<dbReference type="GO" id="GO:0005524">
    <property type="term" value="F:ATP binding"/>
    <property type="evidence" value="ECO:0007669"/>
    <property type="project" value="UniProtKB-KW"/>
</dbReference>
<dbReference type="GO" id="GO:0042802">
    <property type="term" value="F:identical protein binding"/>
    <property type="evidence" value="ECO:0000353"/>
    <property type="project" value="IntAct"/>
</dbReference>
<dbReference type="GO" id="GO:0004672">
    <property type="term" value="F:protein kinase activity"/>
    <property type="evidence" value="ECO:0000314"/>
    <property type="project" value="UniProtKB"/>
</dbReference>
<dbReference type="GO" id="GO:0106310">
    <property type="term" value="F:protein serine kinase activity"/>
    <property type="evidence" value="ECO:0007669"/>
    <property type="project" value="RHEA"/>
</dbReference>
<dbReference type="GO" id="GO:0004674">
    <property type="term" value="F:protein serine/threonine kinase activity"/>
    <property type="evidence" value="ECO:0000314"/>
    <property type="project" value="UniProt"/>
</dbReference>
<dbReference type="GO" id="GO:0044877">
    <property type="term" value="F:protein-containing complex binding"/>
    <property type="evidence" value="ECO:0000315"/>
    <property type="project" value="UniProtKB"/>
</dbReference>
<dbReference type="GO" id="GO:0003713">
    <property type="term" value="F:transcription coactivator activity"/>
    <property type="evidence" value="ECO:0000304"/>
    <property type="project" value="ProtInc"/>
</dbReference>
<dbReference type="GO" id="GO:0032147">
    <property type="term" value="P:activation of protein kinase activity"/>
    <property type="evidence" value="ECO:0000315"/>
    <property type="project" value="UniProtKB"/>
</dbReference>
<dbReference type="GO" id="GO:1990000">
    <property type="term" value="P:amyloid fibril formation"/>
    <property type="evidence" value="ECO:0000315"/>
    <property type="project" value="UniProtKB"/>
</dbReference>
<dbReference type="GO" id="GO:0097190">
    <property type="term" value="P:apoptotic signaling pathway"/>
    <property type="evidence" value="ECO:0000304"/>
    <property type="project" value="ProtInc"/>
</dbReference>
<dbReference type="GO" id="GO:0070301">
    <property type="term" value="P:cellular response to hydrogen peroxide"/>
    <property type="evidence" value="ECO:0000250"/>
    <property type="project" value="ARUK-UCL"/>
</dbReference>
<dbReference type="GO" id="GO:0051607">
    <property type="term" value="P:defense response to virus"/>
    <property type="evidence" value="ECO:0000250"/>
    <property type="project" value="UniProtKB"/>
</dbReference>
<dbReference type="GO" id="GO:0097528">
    <property type="term" value="P:execution phase of necroptosis"/>
    <property type="evidence" value="ECO:0000250"/>
    <property type="project" value="UniProtKB"/>
</dbReference>
<dbReference type="GO" id="GO:0048535">
    <property type="term" value="P:lymph node development"/>
    <property type="evidence" value="ECO:0000250"/>
    <property type="project" value="UniProtKB"/>
</dbReference>
<dbReference type="GO" id="GO:0070266">
    <property type="term" value="P:necroptotic process"/>
    <property type="evidence" value="ECO:0000315"/>
    <property type="project" value="UniProtKB"/>
</dbReference>
<dbReference type="GO" id="GO:0097527">
    <property type="term" value="P:necroptotic signaling pathway"/>
    <property type="evidence" value="ECO:0000314"/>
    <property type="project" value="UniProt"/>
</dbReference>
<dbReference type="GO" id="GO:0038061">
    <property type="term" value="P:non-canonical NF-kappaB signal transduction"/>
    <property type="evidence" value="ECO:0007669"/>
    <property type="project" value="Ensembl"/>
</dbReference>
<dbReference type="GO" id="GO:2001244">
    <property type="term" value="P:positive regulation of intrinsic apoptotic signaling pathway"/>
    <property type="evidence" value="ECO:0007669"/>
    <property type="project" value="Ensembl"/>
</dbReference>
<dbReference type="GO" id="GO:0060545">
    <property type="term" value="P:positive regulation of necroptotic process"/>
    <property type="evidence" value="ECO:0000314"/>
    <property type="project" value="UniProtKB"/>
</dbReference>
<dbReference type="GO" id="GO:0051092">
    <property type="term" value="P:positive regulation of NF-kappaB transcription factor activity"/>
    <property type="evidence" value="ECO:0000314"/>
    <property type="project" value="UniProtKB"/>
</dbReference>
<dbReference type="GO" id="GO:2000379">
    <property type="term" value="P:positive regulation of reactive oxygen species metabolic process"/>
    <property type="evidence" value="ECO:0007669"/>
    <property type="project" value="Ensembl"/>
</dbReference>
<dbReference type="GO" id="GO:0097300">
    <property type="term" value="P:programmed necrotic cell death"/>
    <property type="evidence" value="ECO:0000250"/>
    <property type="project" value="ARUK-UCL"/>
</dbReference>
<dbReference type="GO" id="GO:0036211">
    <property type="term" value="P:protein modification process"/>
    <property type="evidence" value="ECO:0000304"/>
    <property type="project" value="ProtInc"/>
</dbReference>
<dbReference type="GO" id="GO:0072593">
    <property type="term" value="P:reactive oxygen species metabolic process"/>
    <property type="evidence" value="ECO:0007669"/>
    <property type="project" value="Ensembl"/>
</dbReference>
<dbReference type="GO" id="GO:0046006">
    <property type="term" value="P:regulation of activated T cell proliferation"/>
    <property type="evidence" value="ECO:0000250"/>
    <property type="project" value="UniProtKB"/>
</dbReference>
<dbReference type="GO" id="GO:0070235">
    <property type="term" value="P:regulation of activation-induced cell death of T cells"/>
    <property type="evidence" value="ECO:0000250"/>
    <property type="project" value="UniProtKB"/>
</dbReference>
<dbReference type="GO" id="GO:0002819">
    <property type="term" value="P:regulation of adaptive immune response"/>
    <property type="evidence" value="ECO:0000250"/>
    <property type="project" value="UniProtKB"/>
</dbReference>
<dbReference type="GO" id="GO:0042981">
    <property type="term" value="P:regulation of apoptotic process"/>
    <property type="evidence" value="ECO:0000250"/>
    <property type="project" value="UniProtKB"/>
</dbReference>
<dbReference type="GO" id="GO:2000452">
    <property type="term" value="P:regulation of CD8-positive, alpha-beta cytotoxic T cell extravasation"/>
    <property type="evidence" value="ECO:0000250"/>
    <property type="project" value="UniProtKB"/>
</dbReference>
<dbReference type="GO" id="GO:0001914">
    <property type="term" value="P:regulation of T cell mediated cytotoxicity"/>
    <property type="evidence" value="ECO:0000250"/>
    <property type="project" value="UniProtKB"/>
</dbReference>
<dbReference type="GO" id="GO:0032649">
    <property type="term" value="P:regulation of type II interferon production"/>
    <property type="evidence" value="ECO:0000250"/>
    <property type="project" value="UniProtKB"/>
</dbReference>
<dbReference type="GO" id="GO:0007165">
    <property type="term" value="P:signal transduction"/>
    <property type="evidence" value="ECO:0000318"/>
    <property type="project" value="GO_Central"/>
</dbReference>
<dbReference type="GO" id="GO:0048536">
    <property type="term" value="P:spleen development"/>
    <property type="evidence" value="ECO:0000250"/>
    <property type="project" value="UniProtKB"/>
</dbReference>
<dbReference type="GO" id="GO:0033077">
    <property type="term" value="P:T cell differentiation in thymus"/>
    <property type="evidence" value="ECO:0000250"/>
    <property type="project" value="UniProtKB"/>
</dbReference>
<dbReference type="GO" id="GO:0043029">
    <property type="term" value="P:T cell homeostasis"/>
    <property type="evidence" value="ECO:0000250"/>
    <property type="project" value="UniProtKB"/>
</dbReference>
<dbReference type="GO" id="GO:0048538">
    <property type="term" value="P:thymus development"/>
    <property type="evidence" value="ECO:0000250"/>
    <property type="project" value="UniProtKB"/>
</dbReference>
<dbReference type="FunFam" id="1.10.510.10:FF:000661">
    <property type="entry name" value="Receptor-interacting serine/threonine-protein kinase 3"/>
    <property type="match status" value="1"/>
</dbReference>
<dbReference type="Gene3D" id="1.10.510.10">
    <property type="entry name" value="Transferase(Phosphotransferase) domain 1"/>
    <property type="match status" value="1"/>
</dbReference>
<dbReference type="InterPro" id="IPR011009">
    <property type="entry name" value="Kinase-like_dom_sf"/>
</dbReference>
<dbReference type="InterPro" id="IPR000719">
    <property type="entry name" value="Prot_kinase_dom"/>
</dbReference>
<dbReference type="InterPro" id="IPR017441">
    <property type="entry name" value="Protein_kinase_ATP_BS"/>
</dbReference>
<dbReference type="InterPro" id="IPR025735">
    <property type="entry name" value="RHIM"/>
</dbReference>
<dbReference type="InterPro" id="IPR008271">
    <property type="entry name" value="Ser/Thr_kinase_AS"/>
</dbReference>
<dbReference type="InterPro" id="IPR051681">
    <property type="entry name" value="Ser/Thr_Kinases-Pseudokinases"/>
</dbReference>
<dbReference type="PANTHER" id="PTHR44329:SF297">
    <property type="entry name" value="RECEPTOR-INTERACTING SERINE_THREONINE-PROTEIN KINASE 3"/>
    <property type="match status" value="1"/>
</dbReference>
<dbReference type="PANTHER" id="PTHR44329">
    <property type="entry name" value="SERINE/THREONINE-PROTEIN KINASE TNNI3K-RELATED"/>
    <property type="match status" value="1"/>
</dbReference>
<dbReference type="Pfam" id="PF00069">
    <property type="entry name" value="Pkinase"/>
    <property type="match status" value="1"/>
</dbReference>
<dbReference type="Pfam" id="PF12721">
    <property type="entry name" value="RHIM"/>
    <property type="match status" value="1"/>
</dbReference>
<dbReference type="SMART" id="SM00220">
    <property type="entry name" value="S_TKc"/>
    <property type="match status" value="1"/>
</dbReference>
<dbReference type="SUPFAM" id="SSF56112">
    <property type="entry name" value="Protein kinase-like (PK-like)"/>
    <property type="match status" value="1"/>
</dbReference>
<dbReference type="PROSITE" id="PS00107">
    <property type="entry name" value="PROTEIN_KINASE_ATP"/>
    <property type="match status" value="1"/>
</dbReference>
<dbReference type="PROSITE" id="PS50011">
    <property type="entry name" value="PROTEIN_KINASE_DOM"/>
    <property type="match status" value="1"/>
</dbReference>
<dbReference type="PROSITE" id="PS00108">
    <property type="entry name" value="PROTEIN_KINASE_ST"/>
    <property type="match status" value="1"/>
</dbReference>
<accession>Q9Y572</accession>
<accession>B4DJL9</accession>
<accession>C4AM87</accession>
<accession>Q5J795</accession>
<accession>Q5J796</accession>
<accession>Q6P5Y1</accession>
<protein>
    <recommendedName>
        <fullName evidence="28">Receptor-interacting serine/threonine-protein kinase 3</fullName>
        <ecNumber evidence="11 14">2.7.11.1</ecNumber>
    </recommendedName>
    <alternativeName>
        <fullName evidence="25">RIP-like protein kinase 3</fullName>
    </alternativeName>
    <alternativeName>
        <fullName evidence="25">Receptor-interacting protein 3</fullName>
        <shortName evidence="25">RIP-3</shortName>
    </alternativeName>
</protein>
<feature type="chain" id="PRO_0000086610" description="Receptor-interacting serine/threonine-protein kinase 3">
    <location>
        <begin position="1"/>
        <end position="518"/>
    </location>
</feature>
<feature type="domain" description="Protein kinase" evidence="2">
    <location>
        <begin position="21"/>
        <end position="287"/>
    </location>
</feature>
<feature type="region of interest" description="Disordered" evidence="3">
    <location>
        <begin position="355"/>
        <end position="443"/>
    </location>
</feature>
<feature type="region of interest" description="Disordered" evidence="3">
    <location>
        <begin position="476"/>
        <end position="518"/>
    </location>
</feature>
<feature type="short sequence motif" description="RIP homotypic interaction motif (RHIM)" evidence="19">
    <location>
        <begin position="450"/>
        <end position="466"/>
    </location>
</feature>
<feature type="compositionally biased region" description="Polar residues" evidence="3">
    <location>
        <begin position="384"/>
        <end position="408"/>
    </location>
</feature>
<feature type="active site" description="Proton acceptor" evidence="31">
    <location>
        <position position="142"/>
    </location>
</feature>
<feature type="binding site" evidence="2">
    <location>
        <begin position="27"/>
        <end position="35"/>
    </location>
    <ligand>
        <name>ATP</name>
        <dbReference type="ChEBI" id="CHEBI:30616"/>
    </ligand>
</feature>
<feature type="binding site" evidence="29 30 32">
    <location>
        <position position="50"/>
    </location>
    <ligand>
        <name>ATP</name>
        <dbReference type="ChEBI" id="CHEBI:30616"/>
    </ligand>
</feature>
<feature type="modified residue" description="Phosphoserine" evidence="1">
    <location>
        <position position="2"/>
    </location>
</feature>
<feature type="modified residue" description="Phosphoserine" evidence="1">
    <location>
        <position position="164"/>
    </location>
</feature>
<feature type="modified residue" description="Phosphothreonine" evidence="20">
    <location>
        <position position="182"/>
    </location>
</feature>
<feature type="modified residue" description="Phosphoserine; by autocatalysis" evidence="6 10">
    <location>
        <position position="199"/>
    </location>
</feature>
<feature type="modified residue" description="Phosphoserine; by autocatalysis" evidence="14 20">
    <location>
        <position position="227"/>
    </location>
</feature>
<feature type="modified residue" description="Phosphothreonine" evidence="1">
    <location>
        <position position="252"/>
    </location>
</feature>
<feature type="modified residue" description="Phosphoserine" evidence="1">
    <location>
        <position position="299"/>
    </location>
</feature>
<feature type="modified residue" description="Phosphothreonine" evidence="1">
    <location>
        <position position="333"/>
    </location>
</feature>
<feature type="modified residue" description="Phosphoserine" evidence="1">
    <location>
        <position position="389"/>
    </location>
</feature>
<feature type="modified residue" description="Phosphothreonine" evidence="1">
    <location>
        <position position="401"/>
    </location>
</feature>
<feature type="cross-link" description="Glycyl lysine isopeptide (Lys-Gly) (interchain with G-Cter in ubiquitin)" evidence="24">
    <location>
        <position position="42"/>
    </location>
</feature>
<feature type="cross-link" description="Glycyl lysine isopeptide (Lys-Gly) (interchain with G-Cter in ubiquitin)" evidence="24">
    <location>
        <position position="351"/>
    </location>
</feature>
<feature type="cross-link" description="Glycyl lysine isopeptide (Lys-Gly) (interchain with G-Cter in ubiquitin)" evidence="20">
    <location>
        <position position="363"/>
    </location>
</feature>
<feature type="cross-link" description="Glycyl lysine isopeptide (Lys-Gly) (interchain with G-Cter in ubiquitin)" evidence="24">
    <location>
        <position position="518"/>
    </location>
</feature>
<feature type="splice variant" id="VSP_035106" description="In isoform 2." evidence="27">
    <original>VELPTEPSLVYEAVCNRQNRPSLAELPQAGPETPGLEGLKELMQLCWSSEPKDRPSFQECLPKTDEVFQMVENNMNAAVSTVKDFLSQLRSSNRRFSIPESGQGGTEMDGFRRTIENQHSRNDVMVSEWLNKLNLEEPPSSVPKKCPSLTKRSRAQEEQVPQAWTAGTSSDSMAQPPQTPETSTFRNQMPSPTSTGTPSPGPRGNQGAERQGMNWSCRTPEPNPVTGRPLVNIYNCSGVQVGDNNYLTMQQTTALPTWGLAPSGKGRGLQHPPPVGSQEGPKDPEAWSRPQGWYNHSGK</original>
    <variation>CQPNHHSCTKQCATGRTGLHWLSCPKPGLRLPA</variation>
    <location>
        <begin position="220"/>
        <end position="518"/>
    </location>
</feature>
<feature type="splice variant" id="VSP_035107" description="In isoform 3." evidence="26 27">
    <original>LPTEPSLVYEAVCNRQNRPSLAELPQAGPETPGLEGLKELMQLCWSSEPKDRPSFQECLPKTDEVFQMVENNMNAAVSTVKDFLSQLRSSNRRFSIPESGQGGTEMDGFRRTIENQHSRNDVMVSEWLNKLNLEEPPSSVPKKCPSLTKRSRAQEEQVPQAWTAGTSSDSMAQPPQTPETSTFRNQMPSPTSTGTPSPGPRGNQGAERQGMNWSCRTPEPNPVTGRPLVNIYNCSGVQVGDNNYLTMQQTTALPTWGLAPSGKGRGLQHPPPVGSQEGPKDPEAWSRPQGWYNHSGK</original>
    <variation>CKTLGGFWDP</variation>
    <location>
        <begin position="222"/>
        <end position="518"/>
    </location>
</feature>
<feature type="sequence variant" id="VAR_051664" description="In dbSNP:rs7153640.">
    <original>E</original>
    <variation>V</variation>
    <location>
        <position position="260"/>
    </location>
</feature>
<feature type="sequence variant" id="VAR_041048" description="In dbSNP:rs34106261." evidence="8">
    <original>T</original>
    <variation>M</variation>
    <location>
        <position position="300"/>
    </location>
</feature>
<feature type="sequence variant" id="VAR_041049" description="In dbSNP:rs3212254." evidence="8">
    <original>P</original>
    <variation>Q</variation>
    <location>
        <position position="492"/>
    </location>
</feature>
<feature type="mutagenesis site" description="Abolishes kinase activity. Loss of PGAM5- and MLKL-binding. No effect on RIPK1-binding. Loss of interaction with PELI1 and PELI1-mediated ubiquitination. No loss of STUB1-mediated ubiquitination." evidence="4 5 15 20">
    <original>K</original>
    <variation>A</variation>
    <location>
        <position position="50"/>
    </location>
</feature>
<feature type="mutagenesis site" description="Abolishes kinase activity." evidence="4 5 15">
    <original>K</original>
    <variation>D</variation>
    <location>
        <position position="50"/>
    </location>
</feature>
<feature type="mutagenesis site" description="Abolishes kinase activity and ability to mediate necroptosis." evidence="14">
    <original>D</original>
    <variation>N</variation>
    <location>
        <position position="142"/>
    </location>
</feature>
<feature type="mutagenesis site" description="Abolishes kinase activity. Loss of interaction with PELI1 and PELI1-mediated ubiquitination. No loss of interaction with STUB1 and STUB1-mediated ubiquitination. No loss of interaction with RIPK1. Loss of ability to mediate TNF-induced necroptosis. Loss of autophosphorylation at Ser-227." evidence="20">
    <original>T</original>
    <variation>A</variation>
    <location>
        <position position="182"/>
    </location>
</feature>
<feature type="mutagenesis site" description="No loss of interaction with PELI1 and PELI1-mediated ubiquitination. No loss of interaction with RIPK1 and MLKL." evidence="20">
    <original>T</original>
    <variation>S</variation>
    <location>
        <position position="182"/>
    </location>
</feature>
<feature type="mutagenesis site" description="Loss of interaction with PELI1 and PELI1-mediated ubiquitination." evidence="20">
    <original>Y</original>
    <variation>A</variation>
    <variation>F</variation>
    <location>
        <position position="185"/>
    </location>
</feature>
<feature type="mutagenesis site" description="Abolishes ability to mediate necroptosis. Partial loss of kinase activity. No loss of PELI1-mediated degradation." evidence="14 20">
    <original>S</original>
    <variation>A</variation>
    <location>
        <position position="227"/>
    </location>
</feature>
<feature type="mutagenesis site" description="No loss of PELI1-mediated degradation." evidence="20">
    <original>S</original>
    <variation>D</variation>
    <location>
        <position position="227"/>
    </location>
</feature>
<feature type="mutagenesis site" description="Loss of PELI1-mediated ubiquitination. No loss of interaction with PELI1." evidence="20">
    <original>K</original>
    <variation>R</variation>
    <location>
        <position position="363"/>
    </location>
</feature>
<feature type="mutagenesis site" description="Abolished cleavage by S.flexneri OspD3." evidence="22">
    <original>VQVG</original>
    <variation>AAAA</variation>
    <location>
        <begin position="458"/>
        <end position="461"/>
    </location>
</feature>
<feature type="mutagenesis site" description="Reduced necroptosis-associated ubiquitination and amplified necrosome formation and necroptotic cell death." evidence="24">
    <original>K</original>
    <variation>R</variation>
    <location>
        <position position="518"/>
    </location>
</feature>
<feature type="sequence conflict" description="In Ref. 1; AAD39005." evidence="28" ref="1">
    <original>G</original>
    <variation>D</variation>
    <location>
        <position position="30"/>
    </location>
</feature>
<feature type="sequence conflict" description="In Ref. 1; AAD39005." evidence="28" ref="1">
    <original>L</original>
    <variation>P</variation>
    <location>
        <position position="150"/>
    </location>
</feature>
<feature type="sequence conflict" description="In Ref. 1; AAD39005." evidence="28" ref="1">
    <original>R</original>
    <variation>K</variation>
    <location>
        <position position="309"/>
    </location>
</feature>
<feature type="helix" evidence="39">
    <location>
        <begin position="18"/>
        <end position="20"/>
    </location>
</feature>
<feature type="strand" evidence="39">
    <location>
        <begin position="21"/>
        <end position="26"/>
    </location>
</feature>
<feature type="strand" evidence="39">
    <location>
        <begin position="35"/>
        <end position="40"/>
    </location>
</feature>
<feature type="turn" evidence="39">
    <location>
        <begin position="41"/>
        <end position="43"/>
    </location>
</feature>
<feature type="strand" evidence="39">
    <location>
        <begin position="45"/>
        <end position="51"/>
    </location>
</feature>
<feature type="turn" evidence="40">
    <location>
        <begin position="54"/>
        <end position="56"/>
    </location>
</feature>
<feature type="helix" evidence="39">
    <location>
        <begin position="57"/>
        <end position="65"/>
    </location>
</feature>
<feature type="strand" evidence="39">
    <location>
        <begin position="75"/>
        <end position="80"/>
    </location>
</feature>
<feature type="strand" evidence="40">
    <location>
        <begin position="84"/>
        <end position="87"/>
    </location>
</feature>
<feature type="strand" evidence="39">
    <location>
        <begin position="91"/>
        <end position="95"/>
    </location>
</feature>
<feature type="helix" evidence="39">
    <location>
        <begin position="102"/>
        <end position="107"/>
    </location>
</feature>
<feature type="helix" evidence="39">
    <location>
        <begin position="114"/>
        <end position="133"/>
    </location>
</feature>
<feature type="strand" evidence="39">
    <location>
        <begin position="134"/>
        <end position="136"/>
    </location>
</feature>
<feature type="helix" evidence="39">
    <location>
        <begin position="145"/>
        <end position="147"/>
    </location>
</feature>
<feature type="strand" evidence="39">
    <location>
        <begin position="148"/>
        <end position="150"/>
    </location>
</feature>
<feature type="strand" evidence="39">
    <location>
        <begin position="156"/>
        <end position="158"/>
    </location>
</feature>
<feature type="helix" evidence="40">
    <location>
        <begin position="161"/>
        <end position="163"/>
    </location>
</feature>
<feature type="strand" evidence="40">
    <location>
        <begin position="165"/>
        <end position="169"/>
    </location>
</feature>
<feature type="helix" evidence="39">
    <location>
        <begin position="182"/>
        <end position="185"/>
    </location>
</feature>
<feature type="helix" evidence="39">
    <location>
        <begin position="188"/>
        <end position="190"/>
    </location>
</feature>
<feature type="strand" evidence="40">
    <location>
        <begin position="193"/>
        <end position="195"/>
    </location>
</feature>
<feature type="helix" evidence="39">
    <location>
        <begin position="200"/>
        <end position="216"/>
    </location>
</feature>
<feature type="helix" evidence="39">
    <location>
        <begin position="226"/>
        <end position="233"/>
    </location>
</feature>
<feature type="helix" evidence="39">
    <location>
        <begin position="242"/>
        <end position="244"/>
    </location>
</feature>
<feature type="strand" evidence="40">
    <location>
        <begin position="249"/>
        <end position="252"/>
    </location>
</feature>
<feature type="helix" evidence="39">
    <location>
        <begin position="255"/>
        <end position="265"/>
    </location>
</feature>
<feature type="helix" evidence="39">
    <location>
        <begin position="270"/>
        <end position="272"/>
    </location>
</feature>
<feature type="helix" evidence="39">
    <location>
        <begin position="276"/>
        <end position="290"/>
    </location>
</feature>
<feature type="helix" evidence="39">
    <location>
        <begin position="291"/>
        <end position="293"/>
    </location>
</feature>
<feature type="helix" evidence="39">
    <location>
        <begin position="294"/>
        <end position="309"/>
    </location>
</feature>
<feature type="strand" evidence="37">
    <location>
        <begin position="450"/>
        <end position="461"/>
    </location>
</feature>
<feature type="strand" evidence="38">
    <location>
        <begin position="466"/>
        <end position="472"/>
    </location>
</feature>